<name>RL29_HALHL</name>
<sequence>MKASELREKKTEELENELLERRKEQFNLRMQKASGQLARTDQLGKVRRDVARIKTVLNERKRAERQA</sequence>
<proteinExistence type="inferred from homology"/>
<comment type="similarity">
    <text evidence="1">Belongs to the universal ribosomal protein uL29 family.</text>
</comment>
<dbReference type="EMBL" id="CP000544">
    <property type="protein sequence ID" value="ABM61626.1"/>
    <property type="molecule type" value="Genomic_DNA"/>
</dbReference>
<dbReference type="RefSeq" id="WP_011813649.1">
    <property type="nucleotide sequence ID" value="NC_008789.1"/>
</dbReference>
<dbReference type="SMR" id="A1WVB4"/>
<dbReference type="STRING" id="349124.Hhal_0850"/>
<dbReference type="KEGG" id="hha:Hhal_0850"/>
<dbReference type="eggNOG" id="COG0255">
    <property type="taxonomic scope" value="Bacteria"/>
</dbReference>
<dbReference type="HOGENOM" id="CLU_158491_1_2_6"/>
<dbReference type="OrthoDB" id="9815192at2"/>
<dbReference type="Proteomes" id="UP000000647">
    <property type="component" value="Chromosome"/>
</dbReference>
<dbReference type="GO" id="GO:0022625">
    <property type="term" value="C:cytosolic large ribosomal subunit"/>
    <property type="evidence" value="ECO:0007669"/>
    <property type="project" value="TreeGrafter"/>
</dbReference>
<dbReference type="GO" id="GO:0003735">
    <property type="term" value="F:structural constituent of ribosome"/>
    <property type="evidence" value="ECO:0007669"/>
    <property type="project" value="InterPro"/>
</dbReference>
<dbReference type="GO" id="GO:0006412">
    <property type="term" value="P:translation"/>
    <property type="evidence" value="ECO:0007669"/>
    <property type="project" value="UniProtKB-UniRule"/>
</dbReference>
<dbReference type="CDD" id="cd00427">
    <property type="entry name" value="Ribosomal_L29_HIP"/>
    <property type="match status" value="1"/>
</dbReference>
<dbReference type="FunFam" id="1.10.287.310:FF:000001">
    <property type="entry name" value="50S ribosomal protein L29"/>
    <property type="match status" value="1"/>
</dbReference>
<dbReference type="Gene3D" id="1.10.287.310">
    <property type="match status" value="1"/>
</dbReference>
<dbReference type="HAMAP" id="MF_00374">
    <property type="entry name" value="Ribosomal_uL29"/>
    <property type="match status" value="1"/>
</dbReference>
<dbReference type="InterPro" id="IPR050063">
    <property type="entry name" value="Ribosomal_protein_uL29"/>
</dbReference>
<dbReference type="InterPro" id="IPR001854">
    <property type="entry name" value="Ribosomal_uL29"/>
</dbReference>
<dbReference type="InterPro" id="IPR036049">
    <property type="entry name" value="Ribosomal_uL29_sf"/>
</dbReference>
<dbReference type="NCBIfam" id="TIGR00012">
    <property type="entry name" value="L29"/>
    <property type="match status" value="1"/>
</dbReference>
<dbReference type="PANTHER" id="PTHR10916">
    <property type="entry name" value="60S RIBOSOMAL PROTEIN L35/50S RIBOSOMAL PROTEIN L29"/>
    <property type="match status" value="1"/>
</dbReference>
<dbReference type="PANTHER" id="PTHR10916:SF0">
    <property type="entry name" value="LARGE RIBOSOMAL SUBUNIT PROTEIN UL29C"/>
    <property type="match status" value="1"/>
</dbReference>
<dbReference type="Pfam" id="PF00831">
    <property type="entry name" value="Ribosomal_L29"/>
    <property type="match status" value="1"/>
</dbReference>
<dbReference type="SUPFAM" id="SSF46561">
    <property type="entry name" value="Ribosomal protein L29 (L29p)"/>
    <property type="match status" value="1"/>
</dbReference>
<evidence type="ECO:0000255" key="1">
    <source>
        <dbReference type="HAMAP-Rule" id="MF_00374"/>
    </source>
</evidence>
<evidence type="ECO:0000305" key="2"/>
<feature type="chain" id="PRO_1000007496" description="Large ribosomal subunit protein uL29">
    <location>
        <begin position="1"/>
        <end position="67"/>
    </location>
</feature>
<reference key="1">
    <citation type="submission" date="2006-12" db="EMBL/GenBank/DDBJ databases">
        <title>Complete sequence of Halorhodospira halophila SL1.</title>
        <authorList>
            <consortium name="US DOE Joint Genome Institute"/>
            <person name="Copeland A."/>
            <person name="Lucas S."/>
            <person name="Lapidus A."/>
            <person name="Barry K."/>
            <person name="Detter J.C."/>
            <person name="Glavina del Rio T."/>
            <person name="Hammon N."/>
            <person name="Israni S."/>
            <person name="Dalin E."/>
            <person name="Tice H."/>
            <person name="Pitluck S."/>
            <person name="Saunders E."/>
            <person name="Brettin T."/>
            <person name="Bruce D."/>
            <person name="Han C."/>
            <person name="Tapia R."/>
            <person name="Schmutz J."/>
            <person name="Larimer F."/>
            <person name="Land M."/>
            <person name="Hauser L."/>
            <person name="Kyrpides N."/>
            <person name="Mikhailova N."/>
            <person name="Hoff W."/>
            <person name="Richardson P."/>
        </authorList>
    </citation>
    <scope>NUCLEOTIDE SEQUENCE [LARGE SCALE GENOMIC DNA]</scope>
    <source>
        <strain>DSM 244 / SL1</strain>
    </source>
</reference>
<protein>
    <recommendedName>
        <fullName evidence="1">Large ribosomal subunit protein uL29</fullName>
    </recommendedName>
    <alternativeName>
        <fullName evidence="2">50S ribosomal protein L29</fullName>
    </alternativeName>
</protein>
<accession>A1WVB4</accession>
<organism>
    <name type="scientific">Halorhodospira halophila (strain DSM 244 / SL1)</name>
    <name type="common">Ectothiorhodospira halophila (strain DSM 244 / SL1)</name>
    <dbReference type="NCBI Taxonomy" id="349124"/>
    <lineage>
        <taxon>Bacteria</taxon>
        <taxon>Pseudomonadati</taxon>
        <taxon>Pseudomonadota</taxon>
        <taxon>Gammaproteobacteria</taxon>
        <taxon>Chromatiales</taxon>
        <taxon>Ectothiorhodospiraceae</taxon>
        <taxon>Halorhodospira</taxon>
    </lineage>
</organism>
<keyword id="KW-1185">Reference proteome</keyword>
<keyword id="KW-0687">Ribonucleoprotein</keyword>
<keyword id="KW-0689">Ribosomal protein</keyword>
<gene>
    <name evidence="1" type="primary">rpmC</name>
    <name type="ordered locus">Hhal_0850</name>
</gene>